<comment type="function">
    <text evidence="1">CRISPR (clustered regularly interspaced short palindromic repeat) is an adaptive immune system that provides protection against mobile genetic elements (viruses, transposable elements and conjugative plasmids). CRISPR clusters contain spacers, sequences complementary to antecedent mobile elements, and target invading nucleic acids. CRISPR clusters are transcribed and processed into CRISPR RNA (crRNA). The type III-A Csm effector complex binds crRNA and acts as a crRNA-guided RNase, DNase and cyclic oligoadenylate synthase; binding of target RNA cognate to the crRNA is required for all activities. In a heterologous host this Csm effector complex restricts ssRNA phage MS2, suggesting it may target RNA viruses in vivo.</text>
</comment>
<comment type="function">
    <text evidence="2">Csm functions as a non-specific ssDNase. Base-pairing between crRNA and target RNA to form a ternary Csm complex activates a ssDNase activity; target RNA cleavage suppresses the ssDNase, a temporal control that prevents uncontrolled DNA degradation. Viral RNA transcripts probably tether the Csm complex to the viral genome, recruiting Cas10 ssDNA activity which is able to degrade DNA in the transcription bubble, spatially controlling the DNase activity.</text>
</comment>
<comment type="function">
    <text evidence="7">The subunit probably binds to the 5' handle of the crRNA, helping in discrimination between self- and non-self.</text>
</comment>
<comment type="subunit">
    <text evidence="1 2 3 6 7">Part of the Csm effector complex that includes at least Cas10(1), Csm2(3), Csm3(5), Csm4(1), Csm5(1) and mature crRNA (PubMed:25458845, PubMed:27105119, PubMed:28663439). The Csm complex is elongated and slightly twisted with a maximal length of 215 Angstroms and a diameter of 75-80 Angstroms (PubMed:25458845). It has been modeled to have a central protein filamant of Csm3 subunits along which the dsRNA helix of paired crRNA and target RNA binds. The filament is capped at one end by Cas10 and Csm4 and at the other end by Csm5; ssDNA is thought to bind to the N-terminal HD domain of Cas10 (Probable). Csm with a precursor crRNA does not include Csm5, while Cas6, the enzyme probably involved in pre-crRNA processing, is found associated with a subset of the Csm complex (PubMed:25458845).</text>
</comment>
<comment type="miscellaneous">
    <text evidence="1">Encoded in a type III-A CRISPR locus.</text>
</comment>
<comment type="similarity">
    <text evidence="5">Belongs to the CRISPR-associated Csm4 family.</text>
</comment>
<sequence length="299" mass="33748">MTYKLYIMTFQNAHFGSGTLDSSKLTFSADRIFSALVLESLKMGKLDAFLAEANQDKFTLTDAFPFQFGPFLPKPIGYPKHDQIDQSVDVKEVRRQAKLSKKLQFLALENVDDYLNGELFENEEHAVIDTVTKNQPHKDGNLYQVATTRFSNDTSLYVIANESDLLNELMSSLQYSGLGGKRSSGFGRFELDIQNIPLELSDRLTKNHSDKVMSLTTALPVDADLEEAMEDGHYLLTKSSGFAFSHATNENYRKQDLYKFASGSTFSKTFEGQIVDVRPLDFPHAVLNYAKPLFFKLEV</sequence>
<accession>A0A0A7HGA1</accession>
<protein>
    <recommendedName>
        <fullName>CRISPR system Cms protein Csm4</fullName>
    </recommendedName>
    <alternativeName>
        <fullName>CRISPR type III A-associated RAMP protein Csm4</fullName>
    </alternativeName>
</protein>
<keyword id="KW-0002">3D-structure</keyword>
<keyword id="KW-0051">Antiviral defense</keyword>
<keyword id="KW-0694">RNA-binding</keyword>
<reference key="1">
    <citation type="journal article" date="2014" name="Mol. Cell">
        <title>Programmable RNA shredding by the type III-A CRISPR-Cas system of Streptococcus thermophilus.</title>
        <authorList>
            <person name="Tamulaitis G."/>
            <person name="Kazlauskiene M."/>
            <person name="Manakova E."/>
            <person name="Venclovas C."/>
            <person name="Nwokeoji A.O."/>
            <person name="Dickman M.J."/>
            <person name="Horvath P."/>
            <person name="Siksnys V."/>
        </authorList>
    </citation>
    <scope>NUCLEOTIDE SEQUENCE [GENOMIC DNA]</scope>
    <scope>FUNCTION IN PHAGE RESISTANCE</scope>
    <scope>TARGETS SSRNA</scope>
    <scope>SUBUNIT</scope>
    <scope>ANTIVIRAL DEFENSE</scope>
    <source>
        <strain>DGCC8004</strain>
    </source>
</reference>
<reference key="2">
    <citation type="journal article" date="2016" name="Mol. Cell">
        <title>Spatiotemporal control of type III-A CRISPR-Cas immunity: coupling DNA degradation with the target RNA recognition.</title>
        <authorList>
            <person name="Kazlauskiene M."/>
            <person name="Tamulaitis G."/>
            <person name="Kostiuk G."/>
            <person name="Venclovas C."/>
            <person name="Siksnys V."/>
        </authorList>
    </citation>
    <scope>FUNCTION</scope>
    <scope>SUBUNIT</scope>
    <source>
        <strain>DGCC8004</strain>
    </source>
</reference>
<reference key="3">
    <citation type="journal article" date="2017" name="Science">
        <title>A cyclic oligonucleotide signaling pathway in type III CRISPR-Cas systems.</title>
        <authorList>
            <person name="Kazlauskiene M."/>
            <person name="Kostiuk G."/>
            <person name="Venclovas C."/>
            <person name="Tamulaitis G."/>
            <person name="Siksnys V."/>
        </authorList>
    </citation>
    <scope>SUBUNIT</scope>
    <source>
        <strain>DGCC8004</strain>
    </source>
</reference>
<proteinExistence type="evidence at protein level"/>
<name>CSM4_STRTR</name>
<feature type="chain" id="PRO_0000446121" description="CRISPR system Cms protein Csm4">
    <location>
        <begin position="1"/>
        <end position="299"/>
    </location>
</feature>
<feature type="strand" evidence="9">
    <location>
        <begin position="4"/>
        <end position="9"/>
    </location>
</feature>
<feature type="strand" evidence="9">
    <location>
        <begin position="11"/>
        <end position="13"/>
    </location>
</feature>
<feature type="strand" evidence="9">
    <location>
        <begin position="17"/>
        <end position="21"/>
    </location>
</feature>
<feature type="helix" evidence="9">
    <location>
        <begin position="30"/>
        <end position="43"/>
    </location>
</feature>
<feature type="helix" evidence="9">
    <location>
        <begin position="46"/>
        <end position="53"/>
    </location>
</feature>
<feature type="strand" evidence="9">
    <location>
        <begin position="55"/>
        <end position="57"/>
    </location>
</feature>
<feature type="strand" evidence="9">
    <location>
        <begin position="64"/>
        <end position="73"/>
    </location>
</feature>
<feature type="turn" evidence="8">
    <location>
        <begin position="81"/>
        <end position="83"/>
    </location>
</feature>
<feature type="helix" evidence="9">
    <location>
        <begin position="90"/>
        <end position="101"/>
    </location>
</feature>
<feature type="strand" evidence="9">
    <location>
        <begin position="105"/>
        <end position="110"/>
    </location>
</feature>
<feature type="turn" evidence="9">
    <location>
        <begin position="111"/>
        <end position="113"/>
    </location>
</feature>
<feature type="helix" evidence="9">
    <location>
        <begin position="114"/>
        <end position="117"/>
    </location>
</feature>
<feature type="strand" evidence="9">
    <location>
        <begin position="126"/>
        <end position="134"/>
    </location>
</feature>
<feature type="turn" evidence="9">
    <location>
        <begin position="136"/>
        <end position="140"/>
    </location>
</feature>
<feature type="strand" evidence="9">
    <location>
        <begin position="142"/>
        <end position="150"/>
    </location>
</feature>
<feature type="strand" evidence="9">
    <location>
        <begin position="155"/>
        <end position="160"/>
    </location>
</feature>
<feature type="helix" evidence="9">
    <location>
        <begin position="166"/>
        <end position="169"/>
    </location>
</feature>
<feature type="turn" evidence="9">
    <location>
        <begin position="170"/>
        <end position="172"/>
    </location>
</feature>
<feature type="helix" evidence="9">
    <location>
        <begin position="173"/>
        <end position="175"/>
    </location>
</feature>
<feature type="turn" evidence="9">
    <location>
        <begin position="182"/>
        <end position="187"/>
    </location>
</feature>
<feature type="strand" evidence="9">
    <location>
        <begin position="190"/>
        <end position="192"/>
    </location>
</feature>
<feature type="strand" evidence="9">
    <location>
        <begin position="199"/>
        <end position="201"/>
    </location>
</feature>
<feature type="strand" evidence="8">
    <location>
        <begin position="204"/>
        <end position="207"/>
    </location>
</feature>
<feature type="strand" evidence="8">
    <location>
        <begin position="222"/>
        <end position="224"/>
    </location>
</feature>
<feature type="helix" evidence="9">
    <location>
        <begin position="226"/>
        <end position="229"/>
    </location>
</feature>
<evidence type="ECO:0000269" key="1">
    <source>
    </source>
</evidence>
<evidence type="ECO:0000269" key="2">
    <source>
    </source>
</evidence>
<evidence type="ECO:0000269" key="3">
    <source>
    </source>
</evidence>
<evidence type="ECO:0000303" key="4">
    <source>
    </source>
</evidence>
<evidence type="ECO:0000305" key="5"/>
<evidence type="ECO:0000305" key="6">
    <source>
    </source>
</evidence>
<evidence type="ECO:0000305" key="7">
    <source>
    </source>
</evidence>
<evidence type="ECO:0007829" key="8">
    <source>
        <dbReference type="PDB" id="6NUD"/>
    </source>
</evidence>
<evidence type="ECO:0007829" key="9">
    <source>
        <dbReference type="PDB" id="6NUE"/>
    </source>
</evidence>
<gene>
    <name evidence="4" type="primary">csm4</name>
</gene>
<organism>
    <name type="scientific">Streptococcus thermophilus</name>
    <dbReference type="NCBI Taxonomy" id="1308"/>
    <lineage>
        <taxon>Bacteria</taxon>
        <taxon>Bacillati</taxon>
        <taxon>Bacillota</taxon>
        <taxon>Bacilli</taxon>
        <taxon>Lactobacillales</taxon>
        <taxon>Streptococcaceae</taxon>
        <taxon>Streptococcus</taxon>
    </lineage>
</organism>
<dbReference type="EMBL" id="KM222358">
    <property type="protein sequence ID" value="AIZ03607.1"/>
    <property type="molecule type" value="Genomic_DNA"/>
</dbReference>
<dbReference type="RefSeq" id="WP_002950684.1">
    <property type="nucleotide sequence ID" value="NZ_RIIY01000107.1"/>
</dbReference>
<dbReference type="PDB" id="6NUD">
    <property type="method" value="EM"/>
    <property type="resolution" value="3.50 A"/>
    <property type="chains" value="I=1-299"/>
</dbReference>
<dbReference type="PDB" id="6NUE">
    <property type="method" value="EM"/>
    <property type="resolution" value="3.30 A"/>
    <property type="chains" value="I=1-299"/>
</dbReference>
<dbReference type="PDBsum" id="6NUD"/>
<dbReference type="PDBsum" id="6NUE"/>
<dbReference type="EMDB" id="EMD-0516"/>
<dbReference type="EMDB" id="EMD-0519"/>
<dbReference type="SMR" id="A0A0A7HGA1"/>
<dbReference type="PATRIC" id="fig|1308.45.peg.984"/>
<dbReference type="eggNOG" id="COG1567">
    <property type="taxonomic scope" value="Bacteria"/>
</dbReference>
<dbReference type="OMA" id="YFSHFEF"/>
<dbReference type="OrthoDB" id="9792564at2"/>
<dbReference type="GO" id="GO:0003723">
    <property type="term" value="F:RNA binding"/>
    <property type="evidence" value="ECO:0007669"/>
    <property type="project" value="UniProtKB-KW"/>
</dbReference>
<dbReference type="GO" id="GO:0051607">
    <property type="term" value="P:defense response to virus"/>
    <property type="evidence" value="ECO:0007669"/>
    <property type="project" value="UniProtKB-KW"/>
</dbReference>
<dbReference type="InterPro" id="IPR005510">
    <property type="entry name" value="Csm4"/>
</dbReference>
<dbReference type="InterPro" id="IPR040932">
    <property type="entry name" value="Csm4_C"/>
</dbReference>
<dbReference type="InterPro" id="IPR005537">
    <property type="entry name" value="RAMP_III_fam"/>
</dbReference>
<dbReference type="NCBIfam" id="TIGR01903">
    <property type="entry name" value="cas5_csm4"/>
    <property type="match status" value="1"/>
</dbReference>
<dbReference type="Pfam" id="PF17953">
    <property type="entry name" value="Csm4_C"/>
    <property type="match status" value="1"/>
</dbReference>
<dbReference type="Pfam" id="PF03787">
    <property type="entry name" value="RAMPs"/>
    <property type="match status" value="1"/>
</dbReference>